<accession>Q9CQC4</accession>
<accession>D3YUA1</accession>
<reference key="1">
    <citation type="submission" date="2000-12" db="EMBL/GenBank/DDBJ databases">
        <title>A new gene related to mouse thymus atrophy.</title>
        <authorList>
            <person name="Lee Y."/>
            <person name="He W."/>
            <person name="Lu X."/>
        </authorList>
    </citation>
    <scope>NUCLEOTIDE SEQUENCE [MRNA] (ISOFORM 2)</scope>
    <source>
        <strain>BALB/cJ</strain>
    </source>
</reference>
<reference key="2">
    <citation type="journal article" date="2005" name="Science">
        <title>The transcriptional landscape of the mammalian genome.</title>
        <authorList>
            <person name="Carninci P."/>
            <person name="Kasukawa T."/>
            <person name="Katayama S."/>
            <person name="Gough J."/>
            <person name="Frith M.C."/>
            <person name="Maeda N."/>
            <person name="Oyama R."/>
            <person name="Ravasi T."/>
            <person name="Lenhard B."/>
            <person name="Wells C."/>
            <person name="Kodzius R."/>
            <person name="Shimokawa K."/>
            <person name="Bajic V.B."/>
            <person name="Brenner S.E."/>
            <person name="Batalov S."/>
            <person name="Forrest A.R."/>
            <person name="Zavolan M."/>
            <person name="Davis M.J."/>
            <person name="Wilming L.G."/>
            <person name="Aidinis V."/>
            <person name="Allen J.E."/>
            <person name="Ambesi-Impiombato A."/>
            <person name="Apweiler R."/>
            <person name="Aturaliya R.N."/>
            <person name="Bailey T.L."/>
            <person name="Bansal M."/>
            <person name="Baxter L."/>
            <person name="Beisel K.W."/>
            <person name="Bersano T."/>
            <person name="Bono H."/>
            <person name="Chalk A.M."/>
            <person name="Chiu K.P."/>
            <person name="Choudhary V."/>
            <person name="Christoffels A."/>
            <person name="Clutterbuck D.R."/>
            <person name="Crowe M.L."/>
            <person name="Dalla E."/>
            <person name="Dalrymple B.P."/>
            <person name="de Bono B."/>
            <person name="Della Gatta G."/>
            <person name="di Bernardo D."/>
            <person name="Down T."/>
            <person name="Engstrom P."/>
            <person name="Fagiolini M."/>
            <person name="Faulkner G."/>
            <person name="Fletcher C.F."/>
            <person name="Fukushima T."/>
            <person name="Furuno M."/>
            <person name="Futaki S."/>
            <person name="Gariboldi M."/>
            <person name="Georgii-Hemming P."/>
            <person name="Gingeras T.R."/>
            <person name="Gojobori T."/>
            <person name="Green R.E."/>
            <person name="Gustincich S."/>
            <person name="Harbers M."/>
            <person name="Hayashi Y."/>
            <person name="Hensch T.K."/>
            <person name="Hirokawa N."/>
            <person name="Hill D."/>
            <person name="Huminiecki L."/>
            <person name="Iacono M."/>
            <person name="Ikeo K."/>
            <person name="Iwama A."/>
            <person name="Ishikawa T."/>
            <person name="Jakt M."/>
            <person name="Kanapin A."/>
            <person name="Katoh M."/>
            <person name="Kawasawa Y."/>
            <person name="Kelso J."/>
            <person name="Kitamura H."/>
            <person name="Kitano H."/>
            <person name="Kollias G."/>
            <person name="Krishnan S.P."/>
            <person name="Kruger A."/>
            <person name="Kummerfeld S.K."/>
            <person name="Kurochkin I.V."/>
            <person name="Lareau L.F."/>
            <person name="Lazarevic D."/>
            <person name="Lipovich L."/>
            <person name="Liu J."/>
            <person name="Liuni S."/>
            <person name="McWilliam S."/>
            <person name="Madan Babu M."/>
            <person name="Madera M."/>
            <person name="Marchionni L."/>
            <person name="Matsuda H."/>
            <person name="Matsuzawa S."/>
            <person name="Miki H."/>
            <person name="Mignone F."/>
            <person name="Miyake S."/>
            <person name="Morris K."/>
            <person name="Mottagui-Tabar S."/>
            <person name="Mulder N."/>
            <person name="Nakano N."/>
            <person name="Nakauchi H."/>
            <person name="Ng P."/>
            <person name="Nilsson R."/>
            <person name="Nishiguchi S."/>
            <person name="Nishikawa S."/>
            <person name="Nori F."/>
            <person name="Ohara O."/>
            <person name="Okazaki Y."/>
            <person name="Orlando V."/>
            <person name="Pang K.C."/>
            <person name="Pavan W.J."/>
            <person name="Pavesi G."/>
            <person name="Pesole G."/>
            <person name="Petrovsky N."/>
            <person name="Piazza S."/>
            <person name="Reed J."/>
            <person name="Reid J.F."/>
            <person name="Ring B.Z."/>
            <person name="Ringwald M."/>
            <person name="Rost B."/>
            <person name="Ruan Y."/>
            <person name="Salzberg S.L."/>
            <person name="Sandelin A."/>
            <person name="Schneider C."/>
            <person name="Schoenbach C."/>
            <person name="Sekiguchi K."/>
            <person name="Semple C.A."/>
            <person name="Seno S."/>
            <person name="Sessa L."/>
            <person name="Sheng Y."/>
            <person name="Shibata Y."/>
            <person name="Shimada H."/>
            <person name="Shimada K."/>
            <person name="Silva D."/>
            <person name="Sinclair B."/>
            <person name="Sperling S."/>
            <person name="Stupka E."/>
            <person name="Sugiura K."/>
            <person name="Sultana R."/>
            <person name="Takenaka Y."/>
            <person name="Taki K."/>
            <person name="Tammoja K."/>
            <person name="Tan S.L."/>
            <person name="Tang S."/>
            <person name="Taylor M.S."/>
            <person name="Tegner J."/>
            <person name="Teichmann S.A."/>
            <person name="Ueda H.R."/>
            <person name="van Nimwegen E."/>
            <person name="Verardo R."/>
            <person name="Wei C.L."/>
            <person name="Yagi K."/>
            <person name="Yamanishi H."/>
            <person name="Zabarovsky E."/>
            <person name="Zhu S."/>
            <person name="Zimmer A."/>
            <person name="Hide W."/>
            <person name="Bult C."/>
            <person name="Grimmond S.M."/>
            <person name="Teasdale R.D."/>
            <person name="Liu E.T."/>
            <person name="Brusic V."/>
            <person name="Quackenbush J."/>
            <person name="Wahlestedt C."/>
            <person name="Mattick J.S."/>
            <person name="Hume D.A."/>
            <person name="Kai C."/>
            <person name="Sasaki D."/>
            <person name="Tomaru Y."/>
            <person name="Fukuda S."/>
            <person name="Kanamori-Katayama M."/>
            <person name="Suzuki M."/>
            <person name="Aoki J."/>
            <person name="Arakawa T."/>
            <person name="Iida J."/>
            <person name="Imamura K."/>
            <person name="Itoh M."/>
            <person name="Kato T."/>
            <person name="Kawaji H."/>
            <person name="Kawagashira N."/>
            <person name="Kawashima T."/>
            <person name="Kojima M."/>
            <person name="Kondo S."/>
            <person name="Konno H."/>
            <person name="Nakano K."/>
            <person name="Ninomiya N."/>
            <person name="Nishio T."/>
            <person name="Okada M."/>
            <person name="Plessy C."/>
            <person name="Shibata K."/>
            <person name="Shiraki T."/>
            <person name="Suzuki S."/>
            <person name="Tagami M."/>
            <person name="Waki K."/>
            <person name="Watahiki A."/>
            <person name="Okamura-Oho Y."/>
            <person name="Suzuki H."/>
            <person name="Kawai J."/>
            <person name="Hayashizaki Y."/>
        </authorList>
    </citation>
    <scope>NUCLEOTIDE SEQUENCE [LARGE SCALE MRNA] (ISOFORM 2)</scope>
    <source>
        <strain>C57BL/6J</strain>
        <tissue>Testis</tissue>
    </source>
</reference>
<reference key="3">
    <citation type="journal article" date="2009" name="PLoS Biol.">
        <title>Lineage-specific biology revealed by a finished genome assembly of the mouse.</title>
        <authorList>
            <person name="Church D.M."/>
            <person name="Goodstadt L."/>
            <person name="Hillier L.W."/>
            <person name="Zody M.C."/>
            <person name="Goldstein S."/>
            <person name="She X."/>
            <person name="Bult C.J."/>
            <person name="Agarwala R."/>
            <person name="Cherry J.L."/>
            <person name="DiCuccio M."/>
            <person name="Hlavina W."/>
            <person name="Kapustin Y."/>
            <person name="Meric P."/>
            <person name="Maglott D."/>
            <person name="Birtle Z."/>
            <person name="Marques A.C."/>
            <person name="Graves T."/>
            <person name="Zhou S."/>
            <person name="Teague B."/>
            <person name="Potamousis K."/>
            <person name="Churas C."/>
            <person name="Place M."/>
            <person name="Herschleb J."/>
            <person name="Runnheim R."/>
            <person name="Forrest D."/>
            <person name="Amos-Landgraf J."/>
            <person name="Schwartz D.C."/>
            <person name="Cheng Z."/>
            <person name="Lindblad-Toh K."/>
            <person name="Eichler E.E."/>
            <person name="Ponting C.P."/>
        </authorList>
    </citation>
    <scope>NUCLEOTIDE SEQUENCE [LARGE SCALE GENOMIC DNA]</scope>
    <source>
        <strain>C57BL/6J</strain>
    </source>
</reference>
<reference key="4">
    <citation type="journal article" date="2004" name="Genome Res.">
        <title>The status, quality, and expansion of the NIH full-length cDNA project: the Mammalian Gene Collection (MGC).</title>
        <authorList>
            <consortium name="The MGC Project Team"/>
        </authorList>
    </citation>
    <scope>NUCLEOTIDE SEQUENCE [LARGE SCALE MRNA] (ISOFORM 2)</scope>
    <source>
        <strain>C57BL/6J</strain>
        <tissue>Brain</tissue>
    </source>
</reference>
<reference key="5">
    <citation type="journal article" date="2011" name="Nat. Genet.">
        <title>A transition zone complex regulates mammalian ciliogenesis and ciliary membrane composition.</title>
        <authorList>
            <person name="Garcia-Gonzalo F.R."/>
            <person name="Corbit K.C."/>
            <person name="Sirerol-Piquer M.S."/>
            <person name="Ramaswami G."/>
            <person name="Otto E.A."/>
            <person name="Noriega T.R."/>
            <person name="Seol A.D."/>
            <person name="Robinson J.F."/>
            <person name="Bennett C.L."/>
            <person name="Josifova D.J."/>
            <person name="Garcia-Verdugo J.M."/>
            <person name="Katsanis N."/>
            <person name="Hildebrandt F."/>
            <person name="Reiter J.F."/>
        </authorList>
    </citation>
    <scope>FUNCTION</scope>
    <scope>SUBCELLULAR LOCATION</scope>
    <scope>IDENTIFICATION IN THE TECTONIC-LIKE COMPLEX</scope>
</reference>
<organism>
    <name type="scientific">Mus musculus</name>
    <name type="common">Mouse</name>
    <dbReference type="NCBI Taxonomy" id="10090"/>
    <lineage>
        <taxon>Eukaryota</taxon>
        <taxon>Metazoa</taxon>
        <taxon>Chordata</taxon>
        <taxon>Craniata</taxon>
        <taxon>Vertebrata</taxon>
        <taxon>Euteleostomi</taxon>
        <taxon>Mammalia</taxon>
        <taxon>Eutheria</taxon>
        <taxon>Euarchontoglires</taxon>
        <taxon>Glires</taxon>
        <taxon>Rodentia</taxon>
        <taxon>Myomorpha</taxon>
        <taxon>Muroidea</taxon>
        <taxon>Muridae</taxon>
        <taxon>Murinae</taxon>
        <taxon>Mus</taxon>
        <taxon>Mus</taxon>
    </lineage>
</organism>
<proteinExistence type="evidence at protein level"/>
<name>TM216_MOUSE</name>
<feature type="chain" id="PRO_0000318956" description="Transmembrane protein 216">
    <location>
        <begin position="1"/>
        <end position="141"/>
    </location>
</feature>
<feature type="transmembrane region" description="Helical" evidence="2">
    <location>
        <begin position="15"/>
        <end position="35"/>
    </location>
</feature>
<feature type="transmembrane region" description="Helical" evidence="2">
    <location>
        <begin position="49"/>
        <end position="69"/>
    </location>
</feature>
<feature type="transmembrane region" description="Helical" evidence="2">
    <location>
        <begin position="82"/>
        <end position="102"/>
    </location>
</feature>
<feature type="transmembrane region" description="Helical" evidence="2">
    <location>
        <begin position="115"/>
        <end position="135"/>
    </location>
</feature>
<feature type="splice variant" id="VSP_040297" description="In isoform 2." evidence="4 5 6">
    <location>
        <begin position="1"/>
        <end position="54"/>
    </location>
</feature>
<protein>
    <recommendedName>
        <fullName>Transmembrane protein 216</fullName>
    </recommendedName>
    <alternativeName>
        <fullName>Thymus atrophy-related protein</fullName>
    </alternativeName>
</protein>
<evidence type="ECO:0000250" key="1">
    <source>
        <dbReference type="UniProtKB" id="Q9P0N5"/>
    </source>
</evidence>
<evidence type="ECO:0000255" key="2"/>
<evidence type="ECO:0000269" key="3">
    <source>
    </source>
</evidence>
<evidence type="ECO:0000303" key="4">
    <source>
    </source>
</evidence>
<evidence type="ECO:0000303" key="5">
    <source>
    </source>
</evidence>
<evidence type="ECO:0000303" key="6">
    <source ref="1"/>
</evidence>
<evidence type="ECO:0000305" key="7"/>
<sequence length="141" mass="16160">MAPRDKRLSSTPLEVLFFLNGWYYATYFLLELLIFLYKGLLLPYPTANLVLDVVMLLLYLGIEVIRLFFGTKGNLCQRKMPLGISVALTFPSAMMASYYLLLQTYVLRLEAIMNSILLFFCGSELLLEMLTLATFSSMDRI</sequence>
<gene>
    <name type="primary">Tmem216</name>
</gene>
<comment type="function">
    <text evidence="3">Part of the tectonic-like complex which is required for tissue-specific ciliogenesis and may regulate ciliary membrane composition.</text>
</comment>
<comment type="subunit">
    <text evidence="1 3">Part of the tectonic-like complex (also named B9 complex) (PubMed:21725307). Interacts with TMEM107 (By similarity).</text>
</comment>
<comment type="subcellular location">
    <subcellularLocation>
        <location evidence="7">Membrane</location>
        <topology evidence="7">Multi-pass membrane protein</topology>
    </subcellularLocation>
    <subcellularLocation>
        <location evidence="3">Cytoplasm</location>
        <location evidence="3">Cytoskeleton</location>
        <location evidence="3">Cilium basal body</location>
    </subcellularLocation>
    <text>Localizes at the transition zone, a region between the basal body and the ciliary axoneme.</text>
</comment>
<comment type="alternative products">
    <event type="alternative splicing"/>
    <isoform>
        <id>Q9CQC4-1</id>
        <name>1</name>
        <sequence type="displayed"/>
    </isoform>
    <isoform>
        <id>Q9CQC4-2</id>
        <name>2</name>
        <sequence type="described" ref="VSP_040297"/>
    </isoform>
</comment>
<dbReference type="EMBL" id="AF332866">
    <property type="protein sequence ID" value="AAK17992.1"/>
    <property type="molecule type" value="mRNA"/>
</dbReference>
<dbReference type="EMBL" id="AK003740">
    <property type="protein sequence ID" value="BAB22973.1"/>
    <property type="molecule type" value="mRNA"/>
</dbReference>
<dbReference type="EMBL" id="AK014997">
    <property type="protein sequence ID" value="BAB29662.1"/>
    <property type="molecule type" value="mRNA"/>
</dbReference>
<dbReference type="EMBL" id="AC125093">
    <property type="status" value="NOT_ANNOTATED_CDS"/>
    <property type="molecule type" value="Genomic_DNA"/>
</dbReference>
<dbReference type="EMBL" id="BC052053">
    <property type="protein sequence ID" value="AAH52053.1"/>
    <property type="molecule type" value="mRNA"/>
</dbReference>
<dbReference type="CCDS" id="CCDS37913.1">
    <molecule id="Q9CQC4-2"/>
</dbReference>
<dbReference type="CCDS" id="CCDS70934.1">
    <molecule id="Q9CQC4-1"/>
</dbReference>
<dbReference type="RefSeq" id="NP_001264789.1">
    <molecule id="Q9CQC4-1"/>
    <property type="nucleotide sequence ID" value="NM_001277860.1"/>
</dbReference>
<dbReference type="RefSeq" id="NP_001264790.1">
    <molecule id="Q9CQC4-2"/>
    <property type="nucleotide sequence ID" value="NM_001277861.1"/>
</dbReference>
<dbReference type="RefSeq" id="NP_081074.1">
    <molecule id="Q9CQC4-2"/>
    <property type="nucleotide sequence ID" value="NM_026798.3"/>
</dbReference>
<dbReference type="RefSeq" id="XP_006527381.1">
    <molecule id="Q9CQC4-1"/>
    <property type="nucleotide sequence ID" value="XM_006527318.4"/>
</dbReference>
<dbReference type="RefSeq" id="XP_006527382.1">
    <molecule id="Q9CQC4-2"/>
    <property type="nucleotide sequence ID" value="XM_006527319.5"/>
</dbReference>
<dbReference type="CORUM" id="Q9CQC4"/>
<dbReference type="FunCoup" id="Q9CQC4">
    <property type="interactions" value="197"/>
</dbReference>
<dbReference type="STRING" id="10090.ENSMUSP00000115319"/>
<dbReference type="PaxDb" id="10090-ENSMUSP00000025569"/>
<dbReference type="Ensembl" id="ENSMUST00000025569.9">
    <molecule id="Q9CQC4-2"/>
    <property type="protein sequence ID" value="ENSMUSP00000025569.3"/>
    <property type="gene ID" value="ENSMUSG00000024667.13"/>
</dbReference>
<dbReference type="Ensembl" id="ENSMUST00000059582.9">
    <molecule id="Q9CQC4-2"/>
    <property type="protein sequence ID" value="ENSMUSP00000059878.3"/>
    <property type="gene ID" value="ENSMUSG00000024667.13"/>
</dbReference>
<dbReference type="Ensembl" id="ENSMUST00000123788.8">
    <molecule id="Q9CQC4-1"/>
    <property type="protein sequence ID" value="ENSMUSP00000119596.2"/>
    <property type="gene ID" value="ENSMUSG00000024667.13"/>
</dbReference>
<dbReference type="Ensembl" id="ENSMUST00000145210.8">
    <molecule id="Q9CQC4-2"/>
    <property type="protein sequence ID" value="ENSMUSP00000123397.2"/>
    <property type="gene ID" value="ENSMUSG00000024667.13"/>
</dbReference>
<dbReference type="Ensembl" id="ENSMUST00000154383.2">
    <molecule id="Q9CQC4-1"/>
    <property type="protein sequence ID" value="ENSMUSP00000115319.2"/>
    <property type="gene ID" value="ENSMUSG00000024667.13"/>
</dbReference>
<dbReference type="Ensembl" id="ENSMUST00000236561.2">
    <molecule id="Q9CQC4-2"/>
    <property type="protein sequence ID" value="ENSMUSP00000158207.2"/>
    <property type="gene ID" value="ENSMUSG00000024667.13"/>
</dbReference>
<dbReference type="GeneID" id="68642"/>
<dbReference type="KEGG" id="mmu:68642"/>
<dbReference type="UCSC" id="uc008gqc.2">
    <molecule id="Q9CQC4-1"/>
    <property type="organism name" value="mouse"/>
</dbReference>
<dbReference type="AGR" id="MGI:1920020"/>
<dbReference type="CTD" id="51259"/>
<dbReference type="MGI" id="MGI:1920020">
    <property type="gene designation" value="Tmem216"/>
</dbReference>
<dbReference type="VEuPathDB" id="HostDB:ENSMUSG00000024667"/>
<dbReference type="eggNOG" id="KOG4502">
    <property type="taxonomic scope" value="Eukaryota"/>
</dbReference>
<dbReference type="GeneTree" id="ENSGT00940000153899"/>
<dbReference type="HOGENOM" id="CLU_187017_1_0_1"/>
<dbReference type="InParanoid" id="Q9CQC4"/>
<dbReference type="OMA" id="AEILMFV"/>
<dbReference type="OrthoDB" id="262535at2759"/>
<dbReference type="PhylomeDB" id="Q9CQC4"/>
<dbReference type="Reactome" id="R-MMU-5620912">
    <property type="pathway name" value="Anchoring of the basal body to the plasma membrane"/>
</dbReference>
<dbReference type="BioGRID-ORCS" id="68642">
    <property type="hits" value="3 hits in 77 CRISPR screens"/>
</dbReference>
<dbReference type="PRO" id="PR:Q9CQC4"/>
<dbReference type="Proteomes" id="UP000000589">
    <property type="component" value="Chromosome 19"/>
</dbReference>
<dbReference type="RNAct" id="Q9CQC4">
    <property type="molecule type" value="protein"/>
</dbReference>
<dbReference type="Bgee" id="ENSMUSG00000024667">
    <property type="expression patterns" value="Expressed in granulocyte and 205 other cell types or tissues"/>
</dbReference>
<dbReference type="GO" id="GO:0035869">
    <property type="term" value="C:ciliary transition zone"/>
    <property type="evidence" value="ECO:0000315"/>
    <property type="project" value="UniProtKB"/>
</dbReference>
<dbReference type="GO" id="GO:0005929">
    <property type="term" value="C:cilium"/>
    <property type="evidence" value="ECO:0000250"/>
    <property type="project" value="UniProtKB"/>
</dbReference>
<dbReference type="GO" id="GO:0005737">
    <property type="term" value="C:cytoplasm"/>
    <property type="evidence" value="ECO:0007669"/>
    <property type="project" value="UniProtKB-KW"/>
</dbReference>
<dbReference type="GO" id="GO:0005856">
    <property type="term" value="C:cytoskeleton"/>
    <property type="evidence" value="ECO:0007669"/>
    <property type="project" value="UniProtKB-KW"/>
</dbReference>
<dbReference type="GO" id="GO:0016020">
    <property type="term" value="C:membrane"/>
    <property type="evidence" value="ECO:0007669"/>
    <property type="project" value="UniProtKB-SubCell"/>
</dbReference>
<dbReference type="GO" id="GO:0036038">
    <property type="term" value="C:MKS complex"/>
    <property type="evidence" value="ECO:0000314"/>
    <property type="project" value="UniProtKB"/>
</dbReference>
<dbReference type="GO" id="GO:0060271">
    <property type="term" value="P:cilium assembly"/>
    <property type="evidence" value="ECO:0000315"/>
    <property type="project" value="UniProtKB"/>
</dbReference>
<dbReference type="InterPro" id="IPR019184">
    <property type="entry name" value="Uncharacterised_TM-17"/>
</dbReference>
<dbReference type="PANTHER" id="PTHR13531">
    <property type="entry name" value="GEO07735P1-RELATED-RELATED"/>
    <property type="match status" value="1"/>
</dbReference>
<dbReference type="PANTHER" id="PTHR13531:SF5">
    <property type="entry name" value="TRANSMEMBRANE PROTEIN 216"/>
    <property type="match status" value="1"/>
</dbReference>
<dbReference type="Pfam" id="PF09799">
    <property type="entry name" value="Transmemb_17"/>
    <property type="match status" value="1"/>
</dbReference>
<keyword id="KW-0025">Alternative splicing</keyword>
<keyword id="KW-0966">Cell projection</keyword>
<keyword id="KW-0970">Cilium biogenesis/degradation</keyword>
<keyword id="KW-0963">Cytoplasm</keyword>
<keyword id="KW-0206">Cytoskeleton</keyword>
<keyword id="KW-0472">Membrane</keyword>
<keyword id="KW-1185">Reference proteome</keyword>
<keyword id="KW-0812">Transmembrane</keyword>
<keyword id="KW-1133">Transmembrane helix</keyword>